<proteinExistence type="inferred from homology"/>
<evidence type="ECO:0000255" key="1">
    <source>
        <dbReference type="PROSITE-ProRule" id="PRU10117"/>
    </source>
</evidence>
<evidence type="ECO:0000305" key="2"/>
<name>CISY_RICBE</name>
<reference key="1">
    <citation type="journal article" date="1997" name="Int. J. Syst. Bacteriol.">
        <title>Citrate synthase gene comparison, a new tool for phylogenetic analysis, and its application for the rickettsiae.</title>
        <authorList>
            <person name="Roux V."/>
            <person name="Rydkina E."/>
            <person name="Eremeeva M."/>
            <person name="Raoult D."/>
        </authorList>
    </citation>
    <scope>NUCLEOTIDE SEQUENCE [GENOMIC DNA]</scope>
    <source>
        <strain>369L42-1</strain>
    </source>
</reference>
<gene>
    <name type="primary">gltA</name>
</gene>
<accession>Q59734</accession>
<sequence>NTEFAELKIRDKIFKLPILKASIGQDVIDISKVYSEADCFTYDPGFMSTASCRSTITYIDGDQGILRHRGYDIKDLAEKSDFLEVAYLLIYGELPNNKQYNDFTKKVAHHALVNERLHYLFQTFCSSSHPMAIMLAAVGSLSAFYPDLLNFFKEADYELTAIRMIAKIPTIAAMSYKYSIGQPFVYPDNSLDFTENFLHMMFATPCEKYKVNPVIKNALNKIFILHADHEQNASTSTVRIAGSSGANPFACVSTGIASLWGPAHGGANEAVINMLKEIGSVENIPKYIAKAKDKNDNFRLMGFGHRVYKNYDPRAAVLKETCKEVLKELGQLDNNPLLQIAIELEAIALKDEYFIERKLYPNVDFYSGIIYKAMGIPPQMFTVLFATARTVGWMAQWKEMHEDPEQKISRPR</sequence>
<dbReference type="EC" id="2.3.3.16"/>
<dbReference type="EMBL" id="U59716">
    <property type="protein sequence ID" value="AAB02956.1"/>
    <property type="molecule type" value="Genomic_DNA"/>
</dbReference>
<dbReference type="SMR" id="Q59734"/>
<dbReference type="UniPathway" id="UPA00223">
    <property type="reaction ID" value="UER00717"/>
</dbReference>
<dbReference type="GO" id="GO:0005737">
    <property type="term" value="C:cytoplasm"/>
    <property type="evidence" value="ECO:0007669"/>
    <property type="project" value="InterPro"/>
</dbReference>
<dbReference type="GO" id="GO:0004108">
    <property type="term" value="F:citrate (Si)-synthase activity"/>
    <property type="evidence" value="ECO:0007669"/>
    <property type="project" value="InterPro"/>
</dbReference>
<dbReference type="GO" id="GO:0006099">
    <property type="term" value="P:tricarboxylic acid cycle"/>
    <property type="evidence" value="ECO:0007669"/>
    <property type="project" value="UniProtKB-UniPathway"/>
</dbReference>
<dbReference type="CDD" id="cd06114">
    <property type="entry name" value="EcCS_like"/>
    <property type="match status" value="1"/>
</dbReference>
<dbReference type="FunFam" id="1.10.230.10:FF:000002">
    <property type="entry name" value="Citrate synthase"/>
    <property type="match status" value="1"/>
</dbReference>
<dbReference type="Gene3D" id="2.20.28.60">
    <property type="match status" value="1"/>
</dbReference>
<dbReference type="Gene3D" id="1.10.580.10">
    <property type="entry name" value="Citrate Synthase, domain 1"/>
    <property type="match status" value="1"/>
</dbReference>
<dbReference type="Gene3D" id="1.10.230.10">
    <property type="entry name" value="Cytochrome P450-Terp, domain 2"/>
    <property type="match status" value="1"/>
</dbReference>
<dbReference type="InterPro" id="IPR016142">
    <property type="entry name" value="Citrate_synth-like_lrg_a-sub"/>
</dbReference>
<dbReference type="InterPro" id="IPR016143">
    <property type="entry name" value="Citrate_synth-like_sm_a-sub"/>
</dbReference>
<dbReference type="InterPro" id="IPR002020">
    <property type="entry name" value="Citrate_synthase"/>
</dbReference>
<dbReference type="InterPro" id="IPR019810">
    <property type="entry name" value="Citrate_synthase_AS"/>
</dbReference>
<dbReference type="InterPro" id="IPR024176">
    <property type="entry name" value="Citrate_synthase_bac-typ"/>
</dbReference>
<dbReference type="InterPro" id="IPR036969">
    <property type="entry name" value="Citrate_synthase_sf"/>
</dbReference>
<dbReference type="InterPro" id="IPR010953">
    <property type="entry name" value="Citrate_synthase_typ-I"/>
</dbReference>
<dbReference type="NCBIfam" id="TIGR01798">
    <property type="entry name" value="cit_synth_I"/>
    <property type="match status" value="1"/>
</dbReference>
<dbReference type="NCBIfam" id="NF004126">
    <property type="entry name" value="PRK05614.1"/>
    <property type="match status" value="1"/>
</dbReference>
<dbReference type="PANTHER" id="PTHR42871">
    <property type="entry name" value="CITRATE SYNTHASE"/>
    <property type="match status" value="1"/>
</dbReference>
<dbReference type="PANTHER" id="PTHR42871:SF1">
    <property type="entry name" value="CITRATE SYNTHASE"/>
    <property type="match status" value="1"/>
</dbReference>
<dbReference type="Pfam" id="PF00285">
    <property type="entry name" value="Citrate_synt"/>
    <property type="match status" value="1"/>
</dbReference>
<dbReference type="PIRSF" id="PIRSF001369">
    <property type="entry name" value="Citrate_synth"/>
    <property type="match status" value="1"/>
</dbReference>
<dbReference type="PRINTS" id="PR00143">
    <property type="entry name" value="CITRTSNTHASE"/>
</dbReference>
<dbReference type="SUPFAM" id="SSF48256">
    <property type="entry name" value="Citrate synthase"/>
    <property type="match status" value="1"/>
</dbReference>
<dbReference type="PROSITE" id="PS00480">
    <property type="entry name" value="CITRATE_SYNTHASE"/>
    <property type="match status" value="1"/>
</dbReference>
<protein>
    <recommendedName>
        <fullName>Citrate synthase</fullName>
        <ecNumber>2.3.3.16</ecNumber>
    </recommendedName>
</protein>
<feature type="chain" id="PRO_0000169959" description="Citrate synthase">
    <location>
        <begin position="1" status="less than"/>
        <end position="412" status="greater than"/>
    </location>
</feature>
<feature type="active site" evidence="1">
    <location>
        <position position="305"/>
    </location>
</feature>
<feature type="active site" evidence="1">
    <location>
        <position position="364"/>
    </location>
</feature>
<feature type="non-terminal residue">
    <location>
        <position position="1"/>
    </location>
</feature>
<feature type="non-terminal residue">
    <location>
        <position position="412"/>
    </location>
</feature>
<keyword id="KW-0808">Transferase</keyword>
<keyword id="KW-0816">Tricarboxylic acid cycle</keyword>
<organism>
    <name type="scientific">Rickettsia bellii</name>
    <dbReference type="NCBI Taxonomy" id="33990"/>
    <lineage>
        <taxon>Bacteria</taxon>
        <taxon>Pseudomonadati</taxon>
        <taxon>Pseudomonadota</taxon>
        <taxon>Alphaproteobacteria</taxon>
        <taxon>Rickettsiales</taxon>
        <taxon>Rickettsiaceae</taxon>
        <taxon>Rickettsieae</taxon>
        <taxon>Rickettsia</taxon>
        <taxon>belli group</taxon>
    </lineage>
</organism>
<comment type="catalytic activity">
    <reaction evidence="1">
        <text>oxaloacetate + acetyl-CoA + H2O = citrate + CoA + H(+)</text>
        <dbReference type="Rhea" id="RHEA:16845"/>
        <dbReference type="ChEBI" id="CHEBI:15377"/>
        <dbReference type="ChEBI" id="CHEBI:15378"/>
        <dbReference type="ChEBI" id="CHEBI:16452"/>
        <dbReference type="ChEBI" id="CHEBI:16947"/>
        <dbReference type="ChEBI" id="CHEBI:57287"/>
        <dbReference type="ChEBI" id="CHEBI:57288"/>
        <dbReference type="EC" id="2.3.3.16"/>
    </reaction>
</comment>
<comment type="pathway">
    <text>Carbohydrate metabolism; tricarboxylic acid cycle; isocitrate from oxaloacetate: step 1/2.</text>
</comment>
<comment type="miscellaneous">
    <text>Citrate synthase is found in nearly all cells capable of oxidative metabolism.</text>
</comment>
<comment type="similarity">
    <text evidence="2">Belongs to the citrate synthase family.</text>
</comment>